<dbReference type="EC" id="2.4.1.-"/>
<dbReference type="EMBL" id="X64197">
    <property type="protein sequence ID" value="CAA45522.1"/>
    <property type="molecule type" value="Genomic_DNA"/>
</dbReference>
<dbReference type="EMBL" id="U00096">
    <property type="protein sequence ID" value="AAC74133.1"/>
    <property type="molecule type" value="Genomic_DNA"/>
</dbReference>
<dbReference type="EMBL" id="AP009048">
    <property type="protein sequence ID" value="BAA35848.1"/>
    <property type="molecule type" value="Genomic_DNA"/>
</dbReference>
<dbReference type="PIR" id="F64847">
    <property type="entry name" value="F64847"/>
</dbReference>
<dbReference type="RefSeq" id="NP_415567.1">
    <property type="nucleotide sequence ID" value="NC_000913.3"/>
</dbReference>
<dbReference type="RefSeq" id="WP_001295445.1">
    <property type="nucleotide sequence ID" value="NZ_STEB01000016.1"/>
</dbReference>
<dbReference type="BioGRID" id="4260685">
    <property type="interactions" value="160"/>
</dbReference>
<dbReference type="FunCoup" id="P62517">
    <property type="interactions" value="40"/>
</dbReference>
<dbReference type="IntAct" id="P62517">
    <property type="interactions" value="1"/>
</dbReference>
<dbReference type="STRING" id="511145.b1049"/>
<dbReference type="TCDB" id="4.D.3.1.1">
    <property type="family name" value="the glycan glucosyl transferase (opgh) family"/>
</dbReference>
<dbReference type="jPOST" id="P62517"/>
<dbReference type="PaxDb" id="511145-b1049"/>
<dbReference type="EnsemblBacteria" id="AAC74133">
    <property type="protein sequence ID" value="AAC74133"/>
    <property type="gene ID" value="b1049"/>
</dbReference>
<dbReference type="GeneID" id="93776365"/>
<dbReference type="GeneID" id="945624"/>
<dbReference type="KEGG" id="ecj:JW1037"/>
<dbReference type="KEGG" id="eco:b1049"/>
<dbReference type="PATRIC" id="fig|511145.12.peg.1091"/>
<dbReference type="EchoBASE" id="EB1832"/>
<dbReference type="eggNOG" id="COG2943">
    <property type="taxonomic scope" value="Bacteria"/>
</dbReference>
<dbReference type="HOGENOM" id="CLU_015730_1_0_6"/>
<dbReference type="InParanoid" id="P62517"/>
<dbReference type="OMA" id="HYWQLGE"/>
<dbReference type="PhylomeDB" id="P62517"/>
<dbReference type="BioCyc" id="EcoCyc:EG11886-MONOMER"/>
<dbReference type="UniPathway" id="UPA00637"/>
<dbReference type="PRO" id="PR:P62517"/>
<dbReference type="Proteomes" id="UP000000625">
    <property type="component" value="Chromosome"/>
</dbReference>
<dbReference type="GO" id="GO:0005886">
    <property type="term" value="C:plasma membrane"/>
    <property type="evidence" value="ECO:0000314"/>
    <property type="project" value="EcoCyc"/>
</dbReference>
<dbReference type="GO" id="GO:0016758">
    <property type="term" value="F:hexosyltransferase activity"/>
    <property type="evidence" value="ECO:0000318"/>
    <property type="project" value="GO_Central"/>
</dbReference>
<dbReference type="GO" id="GO:1900727">
    <property type="term" value="P:osmoregulated periplasmic glucan biosynthetic process"/>
    <property type="evidence" value="ECO:0000314"/>
    <property type="project" value="EcoCyc"/>
</dbReference>
<dbReference type="GO" id="GO:0008361">
    <property type="term" value="P:regulation of cell size"/>
    <property type="evidence" value="ECO:0000315"/>
    <property type="project" value="EcoCyc"/>
</dbReference>
<dbReference type="CDD" id="cd04191">
    <property type="entry name" value="Glucan_BSP_MdoH"/>
    <property type="match status" value="1"/>
</dbReference>
<dbReference type="FunFam" id="3.90.550.10:FF:000047">
    <property type="entry name" value="Glucans biosynthesis glucosyltransferase H"/>
    <property type="match status" value="1"/>
</dbReference>
<dbReference type="Gene3D" id="3.90.550.10">
    <property type="entry name" value="Spore Coat Polysaccharide Biosynthesis Protein SpsA, Chain A"/>
    <property type="match status" value="1"/>
</dbReference>
<dbReference type="HAMAP" id="MF_01072">
    <property type="entry name" value="MdoH_OpgH"/>
    <property type="match status" value="1"/>
</dbReference>
<dbReference type="InterPro" id="IPR023725">
    <property type="entry name" value="Glucans_biosynth_gluTrFase_H"/>
</dbReference>
<dbReference type="InterPro" id="IPR001173">
    <property type="entry name" value="Glyco_trans_2-like"/>
</dbReference>
<dbReference type="InterPro" id="IPR050321">
    <property type="entry name" value="Glycosyltr_2/OpgH_subfam"/>
</dbReference>
<dbReference type="InterPro" id="IPR029044">
    <property type="entry name" value="Nucleotide-diphossugar_trans"/>
</dbReference>
<dbReference type="NCBIfam" id="NF003955">
    <property type="entry name" value="PRK05454.1-1"/>
    <property type="match status" value="1"/>
</dbReference>
<dbReference type="NCBIfam" id="NF003958">
    <property type="entry name" value="PRK05454.2-1"/>
    <property type="match status" value="1"/>
</dbReference>
<dbReference type="NCBIfam" id="NF003962">
    <property type="entry name" value="PRK05454.2-5"/>
    <property type="match status" value="1"/>
</dbReference>
<dbReference type="PANTHER" id="PTHR43867">
    <property type="entry name" value="CELLULOSE SYNTHASE CATALYTIC SUBUNIT A [UDP-FORMING]"/>
    <property type="match status" value="1"/>
</dbReference>
<dbReference type="PANTHER" id="PTHR43867:SF5">
    <property type="entry name" value="GLUCANS BIOSYNTHESIS GLUCOSYLTRANSFERASE H"/>
    <property type="match status" value="1"/>
</dbReference>
<dbReference type="Pfam" id="PF00535">
    <property type="entry name" value="Glycos_transf_2"/>
    <property type="match status" value="1"/>
</dbReference>
<dbReference type="SUPFAM" id="SSF53448">
    <property type="entry name" value="Nucleotide-diphospho-sugar transferases"/>
    <property type="match status" value="1"/>
</dbReference>
<proteinExistence type="evidence at protein level"/>
<protein>
    <recommendedName>
        <fullName>Glucans biosynthesis glucosyltransferase H</fullName>
        <ecNumber>2.4.1.-</ecNumber>
    </recommendedName>
</protein>
<organism>
    <name type="scientific">Escherichia coli (strain K12)</name>
    <dbReference type="NCBI Taxonomy" id="83333"/>
    <lineage>
        <taxon>Bacteria</taxon>
        <taxon>Pseudomonadati</taxon>
        <taxon>Pseudomonadota</taxon>
        <taxon>Gammaproteobacteria</taxon>
        <taxon>Enterobacterales</taxon>
        <taxon>Enterobacteriaceae</taxon>
        <taxon>Escherichia</taxon>
    </lineage>
</organism>
<keyword id="KW-0997">Cell inner membrane</keyword>
<keyword id="KW-1003">Cell membrane</keyword>
<keyword id="KW-0328">Glycosyltransferase</keyword>
<keyword id="KW-0472">Membrane</keyword>
<keyword id="KW-1185">Reference proteome</keyword>
<keyword id="KW-0808">Transferase</keyword>
<keyword id="KW-0812">Transmembrane</keyword>
<keyword id="KW-1133">Transmembrane helix</keyword>
<evidence type="ECO:0000255" key="1"/>
<evidence type="ECO:0000305" key="2"/>
<reference key="1">
    <citation type="journal article" date="1993" name="Mol. Microbiol.">
        <title>Homology between a genetic locus (mdoA) involved in the osmoregulated biosynthesis of periplasmic glucans in Escherichia coli and a genetic locus (hrpM) controlling pathogenicity of Pseudomonas syringae.</title>
        <authorList>
            <person name="Loubens I."/>
            <person name="Debarbieux L."/>
            <person name="Bohin A."/>
            <person name="Lacroix J.-M."/>
            <person name="Bohin J.-P."/>
        </authorList>
    </citation>
    <scope>NUCLEOTIDE SEQUENCE [GENOMIC DNA]</scope>
    <source>
        <strain>K12</strain>
    </source>
</reference>
<reference key="2">
    <citation type="journal article" date="1996" name="DNA Res.">
        <title>A 718-kb DNA sequence of the Escherichia coli K-12 genome corresponding to the 12.7-28.0 min region on the linkage map.</title>
        <authorList>
            <person name="Oshima T."/>
            <person name="Aiba H."/>
            <person name="Baba T."/>
            <person name="Fujita K."/>
            <person name="Hayashi K."/>
            <person name="Honjo A."/>
            <person name="Ikemoto K."/>
            <person name="Inada T."/>
            <person name="Itoh T."/>
            <person name="Kajihara M."/>
            <person name="Kanai K."/>
            <person name="Kashimoto K."/>
            <person name="Kimura S."/>
            <person name="Kitagawa M."/>
            <person name="Makino K."/>
            <person name="Masuda S."/>
            <person name="Miki T."/>
            <person name="Mizobuchi K."/>
            <person name="Mori H."/>
            <person name="Motomura K."/>
            <person name="Nakamura Y."/>
            <person name="Nashimoto H."/>
            <person name="Nishio Y."/>
            <person name="Saito N."/>
            <person name="Sampei G."/>
            <person name="Seki Y."/>
            <person name="Tagami H."/>
            <person name="Takemoto K."/>
            <person name="Wada C."/>
            <person name="Yamamoto Y."/>
            <person name="Yano M."/>
            <person name="Horiuchi T."/>
        </authorList>
    </citation>
    <scope>NUCLEOTIDE SEQUENCE [LARGE SCALE GENOMIC DNA]</scope>
    <source>
        <strain>K12 / W3110 / ATCC 27325 / DSM 5911</strain>
    </source>
</reference>
<reference key="3">
    <citation type="journal article" date="1997" name="Science">
        <title>The complete genome sequence of Escherichia coli K-12.</title>
        <authorList>
            <person name="Blattner F.R."/>
            <person name="Plunkett G. III"/>
            <person name="Bloch C.A."/>
            <person name="Perna N.T."/>
            <person name="Burland V."/>
            <person name="Riley M."/>
            <person name="Collado-Vides J."/>
            <person name="Glasner J.D."/>
            <person name="Rode C.K."/>
            <person name="Mayhew G.F."/>
            <person name="Gregor J."/>
            <person name="Davis N.W."/>
            <person name="Kirkpatrick H.A."/>
            <person name="Goeden M.A."/>
            <person name="Rose D.J."/>
            <person name="Mau B."/>
            <person name="Shao Y."/>
        </authorList>
    </citation>
    <scope>NUCLEOTIDE SEQUENCE [LARGE SCALE GENOMIC DNA]</scope>
    <source>
        <strain>K12 / MG1655 / ATCC 47076</strain>
    </source>
</reference>
<reference key="4">
    <citation type="journal article" date="2006" name="Mol. Syst. Biol.">
        <title>Highly accurate genome sequences of Escherichia coli K-12 strains MG1655 and W3110.</title>
        <authorList>
            <person name="Hayashi K."/>
            <person name="Morooka N."/>
            <person name="Yamamoto Y."/>
            <person name="Fujita K."/>
            <person name="Isono K."/>
            <person name="Choi S."/>
            <person name="Ohtsubo E."/>
            <person name="Baba T."/>
            <person name="Wanner B.L."/>
            <person name="Mori H."/>
            <person name="Horiuchi T."/>
        </authorList>
    </citation>
    <scope>NUCLEOTIDE SEQUENCE [LARGE SCALE GENOMIC DNA]</scope>
    <source>
        <strain>K12 / W3110 / ATCC 27325 / DSM 5911</strain>
    </source>
</reference>
<reference key="5">
    <citation type="journal article" date="1997" name="J. Bacteriol.">
        <title>Topological analysis of the membrane-bound glucosyltransferase, MdoH, required for osmoregulated periplasmic glucan synthesis in Escherichia coli.</title>
        <authorList>
            <person name="Debarbieux L."/>
            <person name="Bohin A."/>
            <person name="Bohin J.-P."/>
        </authorList>
    </citation>
    <scope>TOPOLOGY</scope>
    <source>
        <strain>K12</strain>
    </source>
</reference>
<reference key="6">
    <citation type="journal article" date="2005" name="Science">
        <title>Global topology analysis of the Escherichia coli inner membrane proteome.</title>
        <authorList>
            <person name="Daley D.O."/>
            <person name="Rapp M."/>
            <person name="Granseth E."/>
            <person name="Melen K."/>
            <person name="Drew D."/>
            <person name="von Heijne G."/>
        </authorList>
    </citation>
    <scope>TOPOLOGY [LARGE SCALE ANALYSIS]</scope>
    <source>
        <strain>K12 / MG1655 / ATCC 47076</strain>
    </source>
</reference>
<comment type="function">
    <text>Involved in the biosynthesis of osmoregulated periplasmic glucans (OPGs).</text>
</comment>
<comment type="pathway">
    <text>Glycan metabolism; osmoregulated periplasmic glucan (OPG) biosynthesis.</text>
</comment>
<comment type="subcellular location">
    <subcellularLocation>
        <location>Cell inner membrane</location>
        <topology>Multi-pass membrane protein</topology>
    </subcellularLocation>
</comment>
<comment type="similarity">
    <text evidence="2">Belongs to the glycosyltransferase 2 family. OpgH subfamily.</text>
</comment>
<feature type="chain" id="PRO_0000210349" description="Glucans biosynthesis glucosyltransferase H">
    <location>
        <begin position="1"/>
        <end position="847"/>
    </location>
</feature>
<feature type="topological domain" description="Cytoplasmic" evidence="1">
    <location>
        <begin position="1"/>
        <end position="139"/>
    </location>
</feature>
<feature type="transmembrane region" description="Helical" evidence="1">
    <location>
        <begin position="140"/>
        <end position="160"/>
    </location>
</feature>
<feature type="topological domain" description="Periplasmic" evidence="1">
    <location>
        <begin position="161"/>
        <end position="193"/>
    </location>
</feature>
<feature type="transmembrane region" description="Helical" evidence="1">
    <location>
        <begin position="194"/>
        <end position="214"/>
    </location>
</feature>
<feature type="topological domain" description="Cytoplasmic" evidence="1">
    <location>
        <begin position="215"/>
        <end position="512"/>
    </location>
</feature>
<feature type="transmembrane region" description="Helical" evidence="1">
    <location>
        <begin position="513"/>
        <end position="533"/>
    </location>
</feature>
<feature type="topological domain" description="Periplasmic" evidence="1">
    <location>
        <begin position="534"/>
        <end position="569"/>
    </location>
</feature>
<feature type="transmembrane region" description="Helical" evidence="1">
    <location>
        <begin position="570"/>
        <end position="590"/>
    </location>
</feature>
<feature type="topological domain" description="Cytoplasmic" evidence="1">
    <location>
        <begin position="591"/>
        <end position="602"/>
    </location>
</feature>
<feature type="transmembrane region" description="Helical" evidence="1">
    <location>
        <begin position="603"/>
        <end position="625"/>
    </location>
</feature>
<feature type="topological domain" description="Periplasmic" evidence="1">
    <location>
        <begin position="626"/>
        <end position="679"/>
    </location>
</feature>
<feature type="transmembrane region" description="Helical" evidence="1">
    <location>
        <begin position="680"/>
        <end position="700"/>
    </location>
</feature>
<feature type="topological domain" description="Cytoplasmic" evidence="1">
    <location>
        <begin position="701"/>
        <end position="847"/>
    </location>
</feature>
<feature type="sequence conflict" description="In Ref. 1; CAA45522." evidence="2" ref="1">
    <original>A</original>
    <variation>G</variation>
    <location>
        <position position="19"/>
    </location>
</feature>
<feature type="sequence conflict" description="In Ref. 1; CAA45522." evidence="2" ref="1">
    <original>P</original>
    <variation>L</variation>
    <location>
        <position position="289"/>
    </location>
</feature>
<accession>P62517</accession>
<accession>P33137</accession>
<accession>P77371</accession>
<gene>
    <name type="primary">mdoH</name>
    <name type="synonym">opgH</name>
    <name type="ordered locus">b1049</name>
    <name type="ordered locus">JW1037</name>
</gene>
<name>OPGH_ECOLI</name>
<sequence length="847" mass="96937">MNKTTEYIDAMPIAASEKAALPKTDIRAVHQALDAEHRTWAREDDSPQGSVKARLEQAWPDSLADGQLIKDDEGRDQLKAMPEAKRSSMFPDPWRTNPVGRFWDRLRGRDVTPRYLARLTKEEQESEQKWRTVGTIRRYILLILTLAQTVVATWYMKTILPYQGWALINPMDMVGQDLWVSFMQLLPYMLQTGILILFAVLFCWVSAGFWTALMGFLQLLIGRDKYSISASTVGDEPLNPEHRTALIMPICNEDVNRVFAGLRATWESVKATGNAKHFDVYILSDSYNPDICVAEQKAWMELIAEVGGEGQIFYRRRRRRVKRKSGNIDDFCRRWGSQYSYMVVLDADSVMTGDCLCGLVRLMEANPNAGIIQSSPKASGMDTLYARCQQFATRVYGPLFTAGLHFWQLGESHYWGHNAIIRVKPFIEHCALAPLPGEGSFAGSILSHDFVEAALMRRAGWGVWIAYDLPGSYEELPPNLLDELKRDRRWCHGNLMNFRLFLVKGMHPVHRAVFLTGVMSYLSAPLWFMFLALSTALQVVHALTEPQYFLQPRQLFPVWPQWRPELAIALFASTMVLLFLPKLLSILLIWCKGTKEYGGFWRVTLSLLLEVLFSVLLAPVRMLFHTVFVVSAFLGWEVVWNSPQRDDDSTSWGEAFKRHGSQLLLGLVWAVGMAWLDLRFLFWLAPIVFSLILSPFVSVISSRATVGLRTKRWKLFLIPEEYSPPQVLVDTDRFLEMNRQRSLDDGFMHAVFNPSFNALATAMATARHRASKVLEIARDRHVEQALNETPEKLNRDRRLVLLSDPVTMARLHFRVWNSPERYSSWVSYYEGIKLNPLALRKPDAASQ</sequence>